<sequence length="392" mass="44592">MEVYLSEFINWKLYEFKKINELGTSTFRYYFKGKIVNLKNKRVSSNEVCYMFKLMDDTGIVELNYSLSKYSPKFEMLRQLQLGISVFVYSDVVCRVSGIRAWKLQIHSKNLESKIEATISEPEQIPCPGFGSDNIVPLSLVNDFKDGAFVNVLVAIQWKEEFEIFNNETKKSLPKQTIHVHDISGSAMIVLIGESQVKSALSWNNETILLIHNAIAYRTNTGMLELSIKDAIIQTLQSFDGKVLKLLNFSIKRKELIKINAYRLSTLEALEKIASQSGEAFGQVGVLIMQSKIKDLTKEGGLVYGNDLTGLRFADLISIIVDETGSVKNPKFSQKLLEEITNIAPTELSVLNEEQAMHLENVFLYRHYRVCVGFLNKQIYVFSSDEPLKSYI</sequence>
<gene>
    <name type="primary">mug11</name>
    <name type="synonym">meu32</name>
    <name type="ORF">SPAP27G11.08c</name>
</gene>
<name>MUG11_SCHPO</name>
<organism>
    <name type="scientific">Schizosaccharomyces pombe (strain 972 / ATCC 24843)</name>
    <name type="common">Fission yeast</name>
    <dbReference type="NCBI Taxonomy" id="284812"/>
    <lineage>
        <taxon>Eukaryota</taxon>
        <taxon>Fungi</taxon>
        <taxon>Dikarya</taxon>
        <taxon>Ascomycota</taxon>
        <taxon>Taphrinomycotina</taxon>
        <taxon>Schizosaccharomycetes</taxon>
        <taxon>Schizosaccharomycetales</taxon>
        <taxon>Schizosaccharomycetaceae</taxon>
        <taxon>Schizosaccharomyces</taxon>
    </lineage>
</organism>
<evidence type="ECO:0000269" key="1">
    <source>
    </source>
</evidence>
<evidence type="ECO:0000269" key="2">
    <source>
    </source>
</evidence>
<proteinExistence type="evidence at protein level"/>
<comment type="function">
    <text evidence="1">Has a role in meiosis.</text>
</comment>
<comment type="subcellular location">
    <subcellularLocation>
        <location evidence="2">Cytoplasm</location>
    </subcellularLocation>
    <subcellularLocation>
        <location evidence="2">Nucleus</location>
    </subcellularLocation>
</comment>
<reference key="1">
    <citation type="submission" date="2005-10" db="EMBL/GenBank/DDBJ databases">
        <title>Meiotic expression upregulated.</title>
        <authorList>
            <person name="Saito T.T."/>
            <person name="Nojima H."/>
        </authorList>
    </citation>
    <scope>NUCLEOTIDE SEQUENCE [GENOMIC DNA]</scope>
</reference>
<reference key="2">
    <citation type="journal article" date="2002" name="Nature">
        <title>The genome sequence of Schizosaccharomyces pombe.</title>
        <authorList>
            <person name="Wood V."/>
            <person name="Gwilliam R."/>
            <person name="Rajandream M.A."/>
            <person name="Lyne M.H."/>
            <person name="Lyne R."/>
            <person name="Stewart A."/>
            <person name="Sgouros J.G."/>
            <person name="Peat N."/>
            <person name="Hayles J."/>
            <person name="Baker S.G."/>
            <person name="Basham D."/>
            <person name="Bowman S."/>
            <person name="Brooks K."/>
            <person name="Brown D."/>
            <person name="Brown S."/>
            <person name="Chillingworth T."/>
            <person name="Churcher C.M."/>
            <person name="Collins M."/>
            <person name="Connor R."/>
            <person name="Cronin A."/>
            <person name="Davis P."/>
            <person name="Feltwell T."/>
            <person name="Fraser A."/>
            <person name="Gentles S."/>
            <person name="Goble A."/>
            <person name="Hamlin N."/>
            <person name="Harris D.E."/>
            <person name="Hidalgo J."/>
            <person name="Hodgson G."/>
            <person name="Holroyd S."/>
            <person name="Hornsby T."/>
            <person name="Howarth S."/>
            <person name="Huckle E.J."/>
            <person name="Hunt S."/>
            <person name="Jagels K."/>
            <person name="James K.D."/>
            <person name="Jones L."/>
            <person name="Jones M."/>
            <person name="Leather S."/>
            <person name="McDonald S."/>
            <person name="McLean J."/>
            <person name="Mooney P."/>
            <person name="Moule S."/>
            <person name="Mungall K.L."/>
            <person name="Murphy L.D."/>
            <person name="Niblett D."/>
            <person name="Odell C."/>
            <person name="Oliver K."/>
            <person name="O'Neil S."/>
            <person name="Pearson D."/>
            <person name="Quail M.A."/>
            <person name="Rabbinowitsch E."/>
            <person name="Rutherford K.M."/>
            <person name="Rutter S."/>
            <person name="Saunders D."/>
            <person name="Seeger K."/>
            <person name="Sharp S."/>
            <person name="Skelton J."/>
            <person name="Simmonds M.N."/>
            <person name="Squares R."/>
            <person name="Squares S."/>
            <person name="Stevens K."/>
            <person name="Taylor K."/>
            <person name="Taylor R.G."/>
            <person name="Tivey A."/>
            <person name="Walsh S.V."/>
            <person name="Warren T."/>
            <person name="Whitehead S."/>
            <person name="Woodward J.R."/>
            <person name="Volckaert G."/>
            <person name="Aert R."/>
            <person name="Robben J."/>
            <person name="Grymonprez B."/>
            <person name="Weltjens I."/>
            <person name="Vanstreels E."/>
            <person name="Rieger M."/>
            <person name="Schaefer M."/>
            <person name="Mueller-Auer S."/>
            <person name="Gabel C."/>
            <person name="Fuchs M."/>
            <person name="Duesterhoeft A."/>
            <person name="Fritzc C."/>
            <person name="Holzer E."/>
            <person name="Moestl D."/>
            <person name="Hilbert H."/>
            <person name="Borzym K."/>
            <person name="Langer I."/>
            <person name="Beck A."/>
            <person name="Lehrach H."/>
            <person name="Reinhardt R."/>
            <person name="Pohl T.M."/>
            <person name="Eger P."/>
            <person name="Zimmermann W."/>
            <person name="Wedler H."/>
            <person name="Wambutt R."/>
            <person name="Purnelle B."/>
            <person name="Goffeau A."/>
            <person name="Cadieu E."/>
            <person name="Dreano S."/>
            <person name="Gloux S."/>
            <person name="Lelaure V."/>
            <person name="Mottier S."/>
            <person name="Galibert F."/>
            <person name="Aves S.J."/>
            <person name="Xiang Z."/>
            <person name="Hunt C."/>
            <person name="Moore K."/>
            <person name="Hurst S.M."/>
            <person name="Lucas M."/>
            <person name="Rochet M."/>
            <person name="Gaillardin C."/>
            <person name="Tallada V.A."/>
            <person name="Garzon A."/>
            <person name="Thode G."/>
            <person name="Daga R.R."/>
            <person name="Cruzado L."/>
            <person name="Jimenez J."/>
            <person name="Sanchez M."/>
            <person name="del Rey F."/>
            <person name="Benito J."/>
            <person name="Dominguez A."/>
            <person name="Revuelta J.L."/>
            <person name="Moreno S."/>
            <person name="Armstrong J."/>
            <person name="Forsburg S.L."/>
            <person name="Cerutti L."/>
            <person name="Lowe T."/>
            <person name="McCombie W.R."/>
            <person name="Paulsen I."/>
            <person name="Potashkin J."/>
            <person name="Shpakovski G.V."/>
            <person name="Ussery D."/>
            <person name="Barrell B.G."/>
            <person name="Nurse P."/>
        </authorList>
    </citation>
    <scope>NUCLEOTIDE SEQUENCE [LARGE SCALE GENOMIC DNA]</scope>
    <source>
        <strain>972 / ATCC 24843</strain>
    </source>
</reference>
<reference key="3">
    <citation type="journal article" date="2005" name="Curr. Biol.">
        <title>A large-scale screen in S. pombe identifies seven novel genes required for critical meiotic events.</title>
        <authorList>
            <person name="Martin-Castellanos C."/>
            <person name="Blanco M."/>
            <person name="Rozalen A.E."/>
            <person name="Perez-Hidalgo L."/>
            <person name="Garcia A.I."/>
            <person name="Conde F."/>
            <person name="Mata J."/>
            <person name="Ellermeier C."/>
            <person name="Davis L."/>
            <person name="San-Segundo P."/>
            <person name="Smith G.R."/>
            <person name="Moreno S."/>
        </authorList>
    </citation>
    <scope>FUNCTION IN MEIOSIS</scope>
</reference>
<reference key="4">
    <citation type="journal article" date="2006" name="Nat. Biotechnol.">
        <title>ORFeome cloning and global analysis of protein localization in the fission yeast Schizosaccharomyces pombe.</title>
        <authorList>
            <person name="Matsuyama A."/>
            <person name="Arai R."/>
            <person name="Yashiroda Y."/>
            <person name="Shirai A."/>
            <person name="Kamata A."/>
            <person name="Sekido S."/>
            <person name="Kobayashi Y."/>
            <person name="Hashimoto A."/>
            <person name="Hamamoto M."/>
            <person name="Hiraoka Y."/>
            <person name="Horinouchi S."/>
            <person name="Yoshida M."/>
        </authorList>
    </citation>
    <scope>SUBCELLULAR LOCATION [LARGE SCALE ANALYSIS]</scope>
</reference>
<keyword id="KW-0963">Cytoplasm</keyword>
<keyword id="KW-0469">Meiosis</keyword>
<keyword id="KW-0539">Nucleus</keyword>
<keyword id="KW-1185">Reference proteome</keyword>
<protein>
    <recommendedName>
        <fullName>Meiotically up-regulated gene 11 protein</fullName>
    </recommendedName>
    <alternativeName>
        <fullName>Meiotic expression up-regulated protein 32</fullName>
    </alternativeName>
</protein>
<dbReference type="EMBL" id="AB237168">
    <property type="protein sequence ID" value="BAE46408.1"/>
    <property type="molecule type" value="Genomic_DNA"/>
</dbReference>
<dbReference type="EMBL" id="CU329670">
    <property type="protein sequence ID" value="CAB76029.1"/>
    <property type="molecule type" value="Genomic_DNA"/>
</dbReference>
<dbReference type="RefSeq" id="NP_593412.1">
    <property type="nucleotide sequence ID" value="NM_001018845.1"/>
</dbReference>
<dbReference type="BioGRID" id="278410">
    <property type="interactions" value="2"/>
</dbReference>
<dbReference type="STRING" id="284812.Q9P7N0"/>
<dbReference type="PaxDb" id="4896-SPAP27G11.08c.1"/>
<dbReference type="EnsemblFungi" id="SPAP27G11.08c.1">
    <property type="protein sequence ID" value="SPAP27G11.08c.1:pep"/>
    <property type="gene ID" value="SPAP27G11.08c"/>
</dbReference>
<dbReference type="GeneID" id="2541921"/>
<dbReference type="KEGG" id="spo:2541921"/>
<dbReference type="PomBase" id="SPAP27G11.08c"/>
<dbReference type="VEuPathDB" id="FungiDB:SPAP27G11.08c"/>
<dbReference type="HOGENOM" id="CLU_679998_0_0_1"/>
<dbReference type="InParanoid" id="Q9P7N0"/>
<dbReference type="OMA" id="ESGCLEH"/>
<dbReference type="PRO" id="PR:Q9P7N0"/>
<dbReference type="Proteomes" id="UP000002485">
    <property type="component" value="Chromosome I"/>
</dbReference>
<dbReference type="GO" id="GO:0005694">
    <property type="term" value="C:chromosome"/>
    <property type="evidence" value="ECO:0000266"/>
    <property type="project" value="PomBase"/>
</dbReference>
<dbReference type="GO" id="GO:0005829">
    <property type="term" value="C:cytosol"/>
    <property type="evidence" value="ECO:0007005"/>
    <property type="project" value="PomBase"/>
</dbReference>
<dbReference type="GO" id="GO:0005634">
    <property type="term" value="C:nucleus"/>
    <property type="evidence" value="ECO:0007005"/>
    <property type="project" value="PomBase"/>
</dbReference>
<dbReference type="GO" id="GO:0008310">
    <property type="term" value="F:single-stranded DNA 3'-5' DNA exonuclease activity"/>
    <property type="evidence" value="ECO:0000266"/>
    <property type="project" value="PomBase"/>
</dbReference>
<dbReference type="GO" id="GO:0007131">
    <property type="term" value="P:reciprocal meiotic recombination"/>
    <property type="evidence" value="ECO:0000266"/>
    <property type="project" value="PomBase"/>
</dbReference>
<accession>Q9P7N0</accession>
<accession>Q3LFP7</accession>
<feature type="chain" id="PRO_0000116793" description="Meiotically up-regulated gene 11 protein">
    <location>
        <begin position="1"/>
        <end position="392"/>
    </location>
</feature>